<protein>
    <recommendedName>
        <fullName evidence="1">V-type ATP synthase subunit D</fullName>
    </recommendedName>
    <alternativeName>
        <fullName evidence="1">V-ATPase subunit D</fullName>
    </alternativeName>
</protein>
<evidence type="ECO:0000255" key="1">
    <source>
        <dbReference type="HAMAP-Rule" id="MF_00271"/>
    </source>
</evidence>
<name>VATD_STRPI</name>
<dbReference type="EMBL" id="CP000936">
    <property type="protein sequence ID" value="ACA37344.1"/>
    <property type="molecule type" value="Genomic_DNA"/>
</dbReference>
<dbReference type="RefSeq" id="WP_000251931.1">
    <property type="nucleotide sequence ID" value="NC_010380.1"/>
</dbReference>
<dbReference type="SMR" id="B1ICC7"/>
<dbReference type="KEGG" id="spv:SPH_1457"/>
<dbReference type="HOGENOM" id="CLU_069688_2_1_9"/>
<dbReference type="Proteomes" id="UP000002163">
    <property type="component" value="Chromosome"/>
</dbReference>
<dbReference type="GO" id="GO:0005524">
    <property type="term" value="F:ATP binding"/>
    <property type="evidence" value="ECO:0007669"/>
    <property type="project" value="UniProtKB-UniRule"/>
</dbReference>
<dbReference type="GO" id="GO:0046933">
    <property type="term" value="F:proton-transporting ATP synthase activity, rotational mechanism"/>
    <property type="evidence" value="ECO:0007669"/>
    <property type="project" value="UniProtKB-UniRule"/>
</dbReference>
<dbReference type="GO" id="GO:0046961">
    <property type="term" value="F:proton-transporting ATPase activity, rotational mechanism"/>
    <property type="evidence" value="ECO:0007669"/>
    <property type="project" value="InterPro"/>
</dbReference>
<dbReference type="GO" id="GO:0042777">
    <property type="term" value="P:proton motive force-driven plasma membrane ATP synthesis"/>
    <property type="evidence" value="ECO:0007669"/>
    <property type="project" value="UniProtKB-UniRule"/>
</dbReference>
<dbReference type="Gene3D" id="1.10.287.3240">
    <property type="match status" value="1"/>
</dbReference>
<dbReference type="HAMAP" id="MF_00271">
    <property type="entry name" value="ATP_synth_D_arch"/>
    <property type="match status" value="1"/>
</dbReference>
<dbReference type="InterPro" id="IPR002699">
    <property type="entry name" value="V_ATPase_D"/>
</dbReference>
<dbReference type="NCBIfam" id="NF001546">
    <property type="entry name" value="PRK00373.1-5"/>
    <property type="match status" value="1"/>
</dbReference>
<dbReference type="NCBIfam" id="TIGR00309">
    <property type="entry name" value="V_ATPase_subD"/>
    <property type="match status" value="1"/>
</dbReference>
<dbReference type="PANTHER" id="PTHR11671">
    <property type="entry name" value="V-TYPE ATP SYNTHASE SUBUNIT D"/>
    <property type="match status" value="1"/>
</dbReference>
<dbReference type="Pfam" id="PF01813">
    <property type="entry name" value="ATP-synt_D"/>
    <property type="match status" value="1"/>
</dbReference>
<keyword id="KW-0066">ATP synthesis</keyword>
<keyword id="KW-0375">Hydrogen ion transport</keyword>
<keyword id="KW-0406">Ion transport</keyword>
<keyword id="KW-0813">Transport</keyword>
<reference key="1">
    <citation type="journal article" date="2010" name="Genome Biol.">
        <title>Structure and dynamics of the pan-genome of Streptococcus pneumoniae and closely related species.</title>
        <authorList>
            <person name="Donati C."/>
            <person name="Hiller N.L."/>
            <person name="Tettelin H."/>
            <person name="Muzzi A."/>
            <person name="Croucher N.J."/>
            <person name="Angiuoli S.V."/>
            <person name="Oggioni M."/>
            <person name="Dunning Hotopp J.C."/>
            <person name="Hu F.Z."/>
            <person name="Riley D.R."/>
            <person name="Covacci A."/>
            <person name="Mitchell T.J."/>
            <person name="Bentley S.D."/>
            <person name="Kilian M."/>
            <person name="Ehrlich G.D."/>
            <person name="Rappuoli R."/>
            <person name="Moxon E.R."/>
            <person name="Masignani V."/>
        </authorList>
    </citation>
    <scope>NUCLEOTIDE SEQUENCE [LARGE SCALE GENOMIC DNA]</scope>
    <source>
        <strain>Hungary19A-6</strain>
    </source>
</reference>
<comment type="function">
    <text evidence="1">Produces ATP from ADP in the presence of a proton gradient across the membrane.</text>
</comment>
<comment type="similarity">
    <text evidence="1">Belongs to the V-ATPase D subunit family.</text>
</comment>
<feature type="chain" id="PRO_1000114484" description="V-type ATP synthase subunit D">
    <location>
        <begin position="1"/>
        <end position="203"/>
    </location>
</feature>
<sequence length="203" mass="23866">MVRLNVKPTRMELNNLKERLKTAERGHKLLKDKRDELMRRFISLIRENNQLRKEVESYLIDNLKAFAVAKSLKNSLMVEELFSIPSKEIELFVEKENIMSVTVPRMHMNITSQNENSEYSYLSSNSEMDDVFATMNSLIDKLLRLAEVEKTCQLMADEIEKTRRRVNGLEYSIIPNLSETIHYIELKLEEAERANLVRIMKVK</sequence>
<organism>
    <name type="scientific">Streptococcus pneumoniae (strain Hungary19A-6)</name>
    <dbReference type="NCBI Taxonomy" id="487214"/>
    <lineage>
        <taxon>Bacteria</taxon>
        <taxon>Bacillati</taxon>
        <taxon>Bacillota</taxon>
        <taxon>Bacilli</taxon>
        <taxon>Lactobacillales</taxon>
        <taxon>Streptococcaceae</taxon>
        <taxon>Streptococcus</taxon>
    </lineage>
</organism>
<accession>B1ICC7</accession>
<proteinExistence type="inferred from homology"/>
<gene>
    <name evidence="1" type="primary">atpD</name>
    <name type="ordered locus">SPH_1457</name>
</gene>